<gene>
    <name evidence="4 7" type="primary">conu</name>
    <name evidence="7" type="ORF">CG17082</name>
</gene>
<feature type="chain" id="PRO_0000439857" description="Rho GTPase-activating protein conundrum">
    <location>
        <begin position="1"/>
        <end position="629"/>
    </location>
</feature>
<feature type="domain" description="Rho-GAP" evidence="1">
    <location>
        <begin position="359"/>
        <end position="565"/>
    </location>
</feature>
<feature type="region of interest" description="Required for interaction with Moe" evidence="3">
    <location>
        <begin position="185"/>
        <end position="294"/>
    </location>
</feature>
<feature type="region of interest" description="Disordered" evidence="2">
    <location>
        <begin position="237"/>
        <end position="261"/>
    </location>
</feature>
<feature type="compositionally biased region" description="Basic and acidic residues" evidence="2">
    <location>
        <begin position="240"/>
        <end position="258"/>
    </location>
</feature>
<feature type="site" description="Arginine finger; crucial for GTP hydrolysis by stabilizing the transition state" evidence="1">
    <location>
        <position position="402"/>
    </location>
</feature>
<feature type="mutagenesis site" description="Required for activity. Inhibits negative regulation of Rho1 but has no effect on the positive regulation of Rac1." evidence="3">
    <original>R</original>
    <variation>A</variation>
    <location>
        <position position="402"/>
    </location>
</feature>
<sequence length="629" mass="71697">MNSNTDLHHSDDQDFSEFLNEYYLQSNSQSIEPEASYEDGEMEAEWLVSAGYPELTKPFEQGLEVSKKDLEPILTTLSKPHAEAIVQLVRTLNKTVRVRTKSRPKRKPDIRDVFREFDEQGTVTRSRSATPDSLDSLQIDEAWTNNSLPTFVNVYEKNTETAIQCVEQSNEIYLKQNLRRTPSAPPKSGTYADIFRGSQVRCDIPLYSADGVELLGYSRIGTIQFPRNRSVSDPFCSIGRSKESRSENDARSQKKKSSEVLSASENECGRLLPMPYNVLSFESICRDSSSLDSCEVLDTCDIPSTLFTDVVLISETDMKRLQTILWLELATIFDRNKVSLDKRKPFKRRRKEEGNLFGVSINALIRRDQQVTGTDSSLVPLFLEKLIGELLRRGSREEGLLRIGGHKQKTELLYNELESTFYQNPDNLDNLFRTATVHELSSLLKRWLRELPQPLLTNELIQLFYQCHTLPSIDQMNALSILCHLLPPENRNTLRSLLSFFNIIINLKDINKMNVHNVATIMAPSMFPPRYIHPSDNNSIAEQVRMAAQCCRLTNILILRGEKLFQVPNNLIVESQKTMMGKKGWHRHRNSNEITAKPSGKASNVGVGHDSTVINKYSTNLKHLHPFVI</sequence>
<dbReference type="EMBL" id="AE013599">
    <property type="protein sequence ID" value="EAA45990.1"/>
    <property type="molecule type" value="Genomic_DNA"/>
</dbReference>
<dbReference type="EMBL" id="AE013599">
    <property type="protein sequence ID" value="EAA45991.3"/>
    <property type="molecule type" value="Genomic_DNA"/>
</dbReference>
<dbReference type="EMBL" id="AE013599">
    <property type="protein sequence ID" value="EAA45992.1"/>
    <property type="molecule type" value="Genomic_DNA"/>
</dbReference>
<dbReference type="EMBL" id="AE013599">
    <property type="protein sequence ID" value="EAA45993.1"/>
    <property type="molecule type" value="Genomic_DNA"/>
</dbReference>
<dbReference type="EMBL" id="AE013599">
    <property type="protein sequence ID" value="EAA45994.1"/>
    <property type="molecule type" value="Genomic_DNA"/>
</dbReference>
<dbReference type="EMBL" id="AY069334">
    <property type="protein sequence ID" value="AAL39479.1"/>
    <property type="molecule type" value="mRNA"/>
</dbReference>
<dbReference type="RefSeq" id="NP_001036454.1">
    <property type="nucleotide sequence ID" value="NM_001042989.3"/>
</dbReference>
<dbReference type="RefSeq" id="NP_001036455.2">
    <property type="nucleotide sequence ID" value="NM_001042990.3"/>
</dbReference>
<dbReference type="RefSeq" id="NP_001036456.3">
    <property type="nucleotide sequence ID" value="NM_001042991.3"/>
</dbReference>
<dbReference type="RefSeq" id="NP_001036457.1">
    <property type="nucleotide sequence ID" value="NM_001042992.2"/>
</dbReference>
<dbReference type="RefSeq" id="NP_001036458.1">
    <property type="nucleotide sequence ID" value="NM_001042993.3"/>
</dbReference>
<dbReference type="SMR" id="Q8T0G4"/>
<dbReference type="DIP" id="DIP-23652N"/>
<dbReference type="FunCoup" id="Q8T0G4">
    <property type="interactions" value="147"/>
</dbReference>
<dbReference type="IntAct" id="Q8T0G4">
    <property type="interactions" value="1"/>
</dbReference>
<dbReference type="STRING" id="7227.FBpp0110554"/>
<dbReference type="PaxDb" id="7227-FBpp0110582"/>
<dbReference type="EnsemblMetazoa" id="FBtr0111285">
    <property type="protein sequence ID" value="FBpp0110582"/>
    <property type="gene ID" value="FBgn0039994"/>
</dbReference>
<dbReference type="EnsemblMetazoa" id="FBtr0111287">
    <property type="protein sequence ID" value="FBpp0110498"/>
    <property type="gene ID" value="FBgn0039994"/>
</dbReference>
<dbReference type="EnsemblMetazoa" id="FBtr0111288">
    <property type="protein sequence ID" value="FBpp0110554"/>
    <property type="gene ID" value="FBgn0039994"/>
</dbReference>
<dbReference type="EnsemblMetazoa" id="FBtr0302385">
    <property type="protein sequence ID" value="FBpp0291580"/>
    <property type="gene ID" value="FBgn0039994"/>
</dbReference>
<dbReference type="EnsemblMetazoa" id="FBtr0345008">
    <property type="protein sequence ID" value="FBpp0311259"/>
    <property type="gene ID" value="FBgn0039994"/>
</dbReference>
<dbReference type="GeneID" id="3355133"/>
<dbReference type="KEGG" id="dme:Dmel_CG17082"/>
<dbReference type="UCSC" id="CG17082-RA">
    <property type="organism name" value="d. melanogaster"/>
</dbReference>
<dbReference type="UCSC" id="CG17082-RC">
    <property type="organism name" value="d. melanogaster"/>
</dbReference>
<dbReference type="AGR" id="FB:FBgn0039994"/>
<dbReference type="CTD" id="3355133"/>
<dbReference type="FlyBase" id="FBgn0039994">
    <property type="gene designation" value="conu"/>
</dbReference>
<dbReference type="VEuPathDB" id="VectorBase:FBgn0039994"/>
<dbReference type="eggNOG" id="KOG2200">
    <property type="taxonomic scope" value="Eukaryota"/>
</dbReference>
<dbReference type="GeneTree" id="ENSGT00940000168361"/>
<dbReference type="HOGENOM" id="CLU_023268_1_0_1"/>
<dbReference type="InParanoid" id="Q8T0G4"/>
<dbReference type="OMA" id="QCCHLTN"/>
<dbReference type="OrthoDB" id="27680at2759"/>
<dbReference type="PhylomeDB" id="Q8T0G4"/>
<dbReference type="Reactome" id="R-DME-8980692">
    <property type="pathway name" value="RHOA GTPase cycle"/>
</dbReference>
<dbReference type="Reactome" id="R-DME-9013148">
    <property type="pathway name" value="CDC42 GTPase cycle"/>
</dbReference>
<dbReference type="BioGRID-ORCS" id="3355133">
    <property type="hits" value="0 hits in 3 CRISPR screens"/>
</dbReference>
<dbReference type="GenomeRNAi" id="3355133"/>
<dbReference type="PRO" id="PR:Q8T0G4"/>
<dbReference type="Proteomes" id="UP000000803">
    <property type="component" value="Chromosome 2R"/>
</dbReference>
<dbReference type="Bgee" id="FBgn0039994">
    <property type="expression patterns" value="Expressed in adult abdomen and 258 other cell types or tissues"/>
</dbReference>
<dbReference type="ExpressionAtlas" id="Q8T0G4">
    <property type="expression patterns" value="baseline and differential"/>
</dbReference>
<dbReference type="GO" id="GO:0070161">
    <property type="term" value="C:anchoring junction"/>
    <property type="evidence" value="ECO:0007669"/>
    <property type="project" value="UniProtKB-SubCell"/>
</dbReference>
<dbReference type="GO" id="GO:0045179">
    <property type="term" value="C:apical cortex"/>
    <property type="evidence" value="ECO:0000314"/>
    <property type="project" value="FlyBase"/>
</dbReference>
<dbReference type="GO" id="GO:0005737">
    <property type="term" value="C:cytoplasm"/>
    <property type="evidence" value="ECO:0000318"/>
    <property type="project" value="GO_Central"/>
</dbReference>
<dbReference type="GO" id="GO:0005886">
    <property type="term" value="C:plasma membrane"/>
    <property type="evidence" value="ECO:0007669"/>
    <property type="project" value="UniProtKB-SubCell"/>
</dbReference>
<dbReference type="GO" id="GO:0005096">
    <property type="term" value="F:GTPase activator activity"/>
    <property type="evidence" value="ECO:0000314"/>
    <property type="project" value="FlyBase"/>
</dbReference>
<dbReference type="GO" id="GO:0008284">
    <property type="term" value="P:positive regulation of cell population proliferation"/>
    <property type="evidence" value="ECO:0000316"/>
    <property type="project" value="FlyBase"/>
</dbReference>
<dbReference type="GO" id="GO:0030833">
    <property type="term" value="P:regulation of actin filament polymerization"/>
    <property type="evidence" value="ECO:0000318"/>
    <property type="project" value="GO_Central"/>
</dbReference>
<dbReference type="GO" id="GO:0051056">
    <property type="term" value="P:regulation of small GTPase mediated signal transduction"/>
    <property type="evidence" value="ECO:0000318"/>
    <property type="project" value="GO_Central"/>
</dbReference>
<dbReference type="GO" id="GO:0007165">
    <property type="term" value="P:signal transduction"/>
    <property type="evidence" value="ECO:0007669"/>
    <property type="project" value="InterPro"/>
</dbReference>
<dbReference type="CDD" id="cd04391">
    <property type="entry name" value="RhoGAP_ARHGAP18"/>
    <property type="match status" value="1"/>
</dbReference>
<dbReference type="FunFam" id="1.10.555.10:FF:000067">
    <property type="entry name" value="Rho GTPase-activating protein conundrum"/>
    <property type="match status" value="1"/>
</dbReference>
<dbReference type="Gene3D" id="1.10.555.10">
    <property type="entry name" value="Rho GTPase activation protein"/>
    <property type="match status" value="1"/>
</dbReference>
<dbReference type="InterPro" id="IPR008936">
    <property type="entry name" value="Rho_GTPase_activation_prot"/>
</dbReference>
<dbReference type="InterPro" id="IPR000198">
    <property type="entry name" value="RhoGAP_dom"/>
</dbReference>
<dbReference type="PANTHER" id="PTHR14963">
    <property type="entry name" value="RHO GTPASE ACTIVATING PROTEIN 18,19-RELATED"/>
    <property type="match status" value="1"/>
</dbReference>
<dbReference type="PANTHER" id="PTHR14963:SF1">
    <property type="entry name" value="RHO GTPASE-ACTIVATING PROTEIN CONUNDRUM"/>
    <property type="match status" value="1"/>
</dbReference>
<dbReference type="Pfam" id="PF00620">
    <property type="entry name" value="RhoGAP"/>
    <property type="match status" value="1"/>
</dbReference>
<dbReference type="SMART" id="SM00324">
    <property type="entry name" value="RhoGAP"/>
    <property type="match status" value="1"/>
</dbReference>
<dbReference type="SUPFAM" id="SSF48350">
    <property type="entry name" value="GTPase activation domain, GAP"/>
    <property type="match status" value="1"/>
</dbReference>
<dbReference type="PROSITE" id="PS50238">
    <property type="entry name" value="RHOGAP"/>
    <property type="match status" value="1"/>
</dbReference>
<evidence type="ECO:0000255" key="1">
    <source>
        <dbReference type="PROSITE-ProRule" id="PRU00172"/>
    </source>
</evidence>
<evidence type="ECO:0000256" key="2">
    <source>
        <dbReference type="SAM" id="MobiDB-lite"/>
    </source>
</evidence>
<evidence type="ECO:0000269" key="3">
    <source>
    </source>
</evidence>
<evidence type="ECO:0000303" key="4">
    <source>
    </source>
</evidence>
<evidence type="ECO:0000305" key="5"/>
<evidence type="ECO:0000312" key="6">
    <source>
        <dbReference type="EMBL" id="AAL39479.1"/>
    </source>
</evidence>
<evidence type="ECO:0000312" key="7">
    <source>
        <dbReference type="FlyBase" id="FBgn0039994"/>
    </source>
</evidence>
<evidence type="ECO:0000312" key="8">
    <source>
        <dbReference type="Proteomes" id="UP000000803"/>
    </source>
</evidence>
<comment type="function">
    <text evidence="3">GTPase-activating protein (GAP) for Rho1; functions with the ERM protein Moe to regulate Rho1 and control proliferation in the developing epithelium. Recruited by Moe to the cell cortex where it negatively regulates Rho1 activity. Can also promote cell proliferation independently of its GAP activity, perhaps by acting with Arf6 to positively regulate Rac1.</text>
</comment>
<comment type="subunit">
    <text evidence="3">Interacts with Moe (via FERM domain).</text>
</comment>
<comment type="interaction">
    <interactant intactId="EBI-194381">
        <id>Q8T0G4</id>
    </interactant>
    <interactant intactId="EBI-206130">
        <id>P46150</id>
        <label>Moe</label>
    </interactant>
    <organismsDiffer>false</organismsDiffer>
    <experiments>6</experiments>
</comment>
<comment type="subcellular location">
    <subcellularLocation>
        <location evidence="3">Cytoplasm</location>
    </subcellularLocation>
    <subcellularLocation>
        <location evidence="3">Cell membrane</location>
        <topology evidence="3">Peripheral membrane protein</topology>
    </subcellularLocation>
    <subcellularLocation>
        <location evidence="3">Cytoplasm</location>
        <location evidence="3">Cell cortex</location>
    </subcellularLocation>
    <subcellularLocation>
        <location evidence="3">Cell junction</location>
    </subcellularLocation>
    <text evidence="3">Recruited by Moe to the cell cortex. In the epithelium, predominately expressed at the apical cortex.</text>
</comment>
<comment type="disruption phenotype">
    <text evidence="3">RNAi-mediated knockdown does not affect epithelial integrity or apoptosis.</text>
</comment>
<accession>Q8T0G4</accession>
<accession>Q0E9Q3</accession>
<protein>
    <recommendedName>
        <fullName evidence="4">Rho GTPase-activating protein conundrum</fullName>
    </recommendedName>
</protein>
<keyword id="KW-0965">Cell junction</keyword>
<keyword id="KW-1003">Cell membrane</keyword>
<keyword id="KW-0963">Cytoplasm</keyword>
<keyword id="KW-0343">GTPase activation</keyword>
<keyword id="KW-0472">Membrane</keyword>
<keyword id="KW-1185">Reference proteome</keyword>
<name>CONU_DROME</name>
<proteinExistence type="evidence at protein level"/>
<organism evidence="8">
    <name type="scientific">Drosophila melanogaster</name>
    <name type="common">Fruit fly</name>
    <dbReference type="NCBI Taxonomy" id="7227"/>
    <lineage>
        <taxon>Eukaryota</taxon>
        <taxon>Metazoa</taxon>
        <taxon>Ecdysozoa</taxon>
        <taxon>Arthropoda</taxon>
        <taxon>Hexapoda</taxon>
        <taxon>Insecta</taxon>
        <taxon>Pterygota</taxon>
        <taxon>Neoptera</taxon>
        <taxon>Endopterygota</taxon>
        <taxon>Diptera</taxon>
        <taxon>Brachycera</taxon>
        <taxon>Muscomorpha</taxon>
        <taxon>Ephydroidea</taxon>
        <taxon>Drosophilidae</taxon>
        <taxon>Drosophila</taxon>
        <taxon>Sophophora</taxon>
    </lineage>
</organism>
<reference evidence="8" key="1">
    <citation type="journal article" date="2000" name="Science">
        <title>The genome sequence of Drosophila melanogaster.</title>
        <authorList>
            <person name="Adams M.D."/>
            <person name="Celniker S.E."/>
            <person name="Holt R.A."/>
            <person name="Evans C.A."/>
            <person name="Gocayne J.D."/>
            <person name="Amanatides P.G."/>
            <person name="Scherer S.E."/>
            <person name="Li P.W."/>
            <person name="Hoskins R.A."/>
            <person name="Galle R.F."/>
            <person name="George R.A."/>
            <person name="Lewis S.E."/>
            <person name="Richards S."/>
            <person name="Ashburner M."/>
            <person name="Henderson S.N."/>
            <person name="Sutton G.G."/>
            <person name="Wortman J.R."/>
            <person name="Yandell M.D."/>
            <person name="Zhang Q."/>
            <person name="Chen L.X."/>
            <person name="Brandon R.C."/>
            <person name="Rogers Y.-H.C."/>
            <person name="Blazej R.G."/>
            <person name="Champe M."/>
            <person name="Pfeiffer B.D."/>
            <person name="Wan K.H."/>
            <person name="Doyle C."/>
            <person name="Baxter E.G."/>
            <person name="Helt G."/>
            <person name="Nelson C.R."/>
            <person name="Miklos G.L.G."/>
            <person name="Abril J.F."/>
            <person name="Agbayani A."/>
            <person name="An H.-J."/>
            <person name="Andrews-Pfannkoch C."/>
            <person name="Baldwin D."/>
            <person name="Ballew R.M."/>
            <person name="Basu A."/>
            <person name="Baxendale J."/>
            <person name="Bayraktaroglu L."/>
            <person name="Beasley E.M."/>
            <person name="Beeson K.Y."/>
            <person name="Benos P.V."/>
            <person name="Berman B.P."/>
            <person name="Bhandari D."/>
            <person name="Bolshakov S."/>
            <person name="Borkova D."/>
            <person name="Botchan M.R."/>
            <person name="Bouck J."/>
            <person name="Brokstein P."/>
            <person name="Brottier P."/>
            <person name="Burtis K.C."/>
            <person name="Busam D.A."/>
            <person name="Butler H."/>
            <person name="Cadieu E."/>
            <person name="Center A."/>
            <person name="Chandra I."/>
            <person name="Cherry J.M."/>
            <person name="Cawley S."/>
            <person name="Dahlke C."/>
            <person name="Davenport L.B."/>
            <person name="Davies P."/>
            <person name="de Pablos B."/>
            <person name="Delcher A."/>
            <person name="Deng Z."/>
            <person name="Mays A.D."/>
            <person name="Dew I."/>
            <person name="Dietz S.M."/>
            <person name="Dodson K."/>
            <person name="Doup L.E."/>
            <person name="Downes M."/>
            <person name="Dugan-Rocha S."/>
            <person name="Dunkov B.C."/>
            <person name="Dunn P."/>
            <person name="Durbin K.J."/>
            <person name="Evangelista C.C."/>
            <person name="Ferraz C."/>
            <person name="Ferriera S."/>
            <person name="Fleischmann W."/>
            <person name="Fosler C."/>
            <person name="Gabrielian A.E."/>
            <person name="Garg N.S."/>
            <person name="Gelbart W.M."/>
            <person name="Glasser K."/>
            <person name="Glodek A."/>
            <person name="Gong F."/>
            <person name="Gorrell J.H."/>
            <person name="Gu Z."/>
            <person name="Guan P."/>
            <person name="Harris M."/>
            <person name="Harris N.L."/>
            <person name="Harvey D.A."/>
            <person name="Heiman T.J."/>
            <person name="Hernandez J.R."/>
            <person name="Houck J."/>
            <person name="Hostin D."/>
            <person name="Houston K.A."/>
            <person name="Howland T.J."/>
            <person name="Wei M.-H."/>
            <person name="Ibegwam C."/>
            <person name="Jalali M."/>
            <person name="Kalush F."/>
            <person name="Karpen G.H."/>
            <person name="Ke Z."/>
            <person name="Kennison J.A."/>
            <person name="Ketchum K.A."/>
            <person name="Kimmel B.E."/>
            <person name="Kodira C.D."/>
            <person name="Kraft C.L."/>
            <person name="Kravitz S."/>
            <person name="Kulp D."/>
            <person name="Lai Z."/>
            <person name="Lasko P."/>
            <person name="Lei Y."/>
            <person name="Levitsky A.A."/>
            <person name="Li J.H."/>
            <person name="Li Z."/>
            <person name="Liang Y."/>
            <person name="Lin X."/>
            <person name="Liu X."/>
            <person name="Mattei B."/>
            <person name="McIntosh T.C."/>
            <person name="McLeod M.P."/>
            <person name="McPherson D."/>
            <person name="Merkulov G."/>
            <person name="Milshina N.V."/>
            <person name="Mobarry C."/>
            <person name="Morris J."/>
            <person name="Moshrefi A."/>
            <person name="Mount S.M."/>
            <person name="Moy M."/>
            <person name="Murphy B."/>
            <person name="Murphy L."/>
            <person name="Muzny D.M."/>
            <person name="Nelson D.L."/>
            <person name="Nelson D.R."/>
            <person name="Nelson K.A."/>
            <person name="Nixon K."/>
            <person name="Nusskern D.R."/>
            <person name="Pacleb J.M."/>
            <person name="Palazzolo M."/>
            <person name="Pittman G.S."/>
            <person name="Pan S."/>
            <person name="Pollard J."/>
            <person name="Puri V."/>
            <person name="Reese M.G."/>
            <person name="Reinert K."/>
            <person name="Remington K."/>
            <person name="Saunders R.D.C."/>
            <person name="Scheeler F."/>
            <person name="Shen H."/>
            <person name="Shue B.C."/>
            <person name="Siden-Kiamos I."/>
            <person name="Simpson M."/>
            <person name="Skupski M.P."/>
            <person name="Smith T.J."/>
            <person name="Spier E."/>
            <person name="Spradling A.C."/>
            <person name="Stapleton M."/>
            <person name="Strong R."/>
            <person name="Sun E."/>
            <person name="Svirskas R."/>
            <person name="Tector C."/>
            <person name="Turner R."/>
            <person name="Venter E."/>
            <person name="Wang A.H."/>
            <person name="Wang X."/>
            <person name="Wang Z.-Y."/>
            <person name="Wassarman D.A."/>
            <person name="Weinstock G.M."/>
            <person name="Weissenbach J."/>
            <person name="Williams S.M."/>
            <person name="Woodage T."/>
            <person name="Worley K.C."/>
            <person name="Wu D."/>
            <person name="Yang S."/>
            <person name="Yao Q.A."/>
            <person name="Ye J."/>
            <person name="Yeh R.-F."/>
            <person name="Zaveri J.S."/>
            <person name="Zhan M."/>
            <person name="Zhang G."/>
            <person name="Zhao Q."/>
            <person name="Zheng L."/>
            <person name="Zheng X.H."/>
            <person name="Zhong F.N."/>
            <person name="Zhong W."/>
            <person name="Zhou X."/>
            <person name="Zhu S.C."/>
            <person name="Zhu X."/>
            <person name="Smith H.O."/>
            <person name="Gibbs R.A."/>
            <person name="Myers E.W."/>
            <person name="Rubin G.M."/>
            <person name="Venter J.C."/>
        </authorList>
    </citation>
    <scope>NUCLEOTIDE SEQUENCE [LARGE SCALE GENOMIC DNA]</scope>
    <source>
        <strain evidence="8">Berkeley</strain>
    </source>
</reference>
<reference evidence="8" key="2">
    <citation type="journal article" date="2002" name="Genome Biol.">
        <title>Annotation of the Drosophila melanogaster euchromatic genome: a systematic review.</title>
        <authorList>
            <person name="Misra S."/>
            <person name="Crosby M.A."/>
            <person name="Mungall C.J."/>
            <person name="Matthews B.B."/>
            <person name="Campbell K.S."/>
            <person name="Hradecky P."/>
            <person name="Huang Y."/>
            <person name="Kaminker J.S."/>
            <person name="Millburn G.H."/>
            <person name="Prochnik S.E."/>
            <person name="Smith C.D."/>
            <person name="Tupy J.L."/>
            <person name="Whitfield E.J."/>
            <person name="Bayraktaroglu L."/>
            <person name="Berman B.P."/>
            <person name="Bettencourt B.R."/>
            <person name="Celniker S.E."/>
            <person name="de Grey A.D.N.J."/>
            <person name="Drysdale R.A."/>
            <person name="Harris N.L."/>
            <person name="Richter J."/>
            <person name="Russo S."/>
            <person name="Schroeder A.J."/>
            <person name="Shu S.Q."/>
            <person name="Stapleton M."/>
            <person name="Yamada C."/>
            <person name="Ashburner M."/>
            <person name="Gelbart W.M."/>
            <person name="Rubin G.M."/>
            <person name="Lewis S.E."/>
        </authorList>
    </citation>
    <scope>GENOME REANNOTATION</scope>
    <source>
        <strain evidence="8">Berkeley</strain>
    </source>
</reference>
<reference evidence="6" key="3">
    <citation type="submission" date="2006-06" db="EMBL/GenBank/DDBJ databases">
        <authorList>
            <person name="Stapleton M."/>
            <person name="Carlson J."/>
            <person name="Chavez C."/>
            <person name="Frise E."/>
            <person name="George R."/>
            <person name="Pacleb J."/>
            <person name="Park S."/>
            <person name="Wan K."/>
            <person name="Yu C."/>
            <person name="Celniker S."/>
        </authorList>
    </citation>
    <scope>NUCLEOTIDE SEQUENCE [LARGE SCALE MRNA]</scope>
    <source>
        <strain evidence="6">Berkeley</strain>
        <tissue evidence="6">Embryo</tissue>
    </source>
</reference>
<reference evidence="5" key="4">
    <citation type="journal article" date="2013" name="Mol. Biol. Cell">
        <title>Conundrum, an ARHGAP18 orthologue, regulates RhoA and proliferation through interactions with Moesin.</title>
        <authorList>
            <person name="Neisch A.L."/>
            <person name="Formstecher E."/>
            <person name="Fehon R.G."/>
        </authorList>
    </citation>
    <scope>FUNCTION</scope>
    <scope>INTERACTION WITH MOE</scope>
    <scope>SUBCELLULAR LOCATION</scope>
    <scope>DISRUPTION PHENOTYPE</scope>
    <scope>MUTAGENESIS OF ARG-402</scope>
</reference>